<sequence length="540" mass="60719">MSSVTENGDVTAGKPNEEKTYKKTTSSAIKGAIQLGIGYTVGNLTSKPDRDVLMQDFYVVESVFLPSEGSNLTPAHHYPDFRFKTYAPLAFRYFRELFGIKPDDYLYSICSEPLIELSNPGASGSLFFVTSDDEFIIKTVQHKEAEFLQKLLPGYYMNLNQNPRTLLPKFYGLYCVQSGGINIRIVVMNNVLPRALKMNFTYDLKGSTYKRRASRKEREKSNPTFKDLDFLQDMHEGLYFDSETHSALMKTLQRDCRVLESFKIMDYSLLLGIHVLNSNVREKEGESSQNASDGKRPGGQKVLYSTAMESIQGPGKSGDSVVTETTNTMGGIPAKSHKGEKLLLFMGIIDILQSYRLMKKLEHSWKALVYDGDTVSVHRPSFYADRFLKFMNTRVFKKVQALRSSPSKKRCNSITALKATSQEIVSAVSQEWKDEKHSIITEGQSYSSLDEEVLGSRRRPDLVPSTPSLFEAASLATTVSSSSLNVDERYQRDQTMLYSSSKELPSSSTFTLEDSAIYLTSEQSTLETENDNASVLDVYL</sequence>
<keyword id="KW-0067">ATP-binding</keyword>
<keyword id="KW-1003">Cell membrane</keyword>
<keyword id="KW-0963">Cytoplasm</keyword>
<keyword id="KW-0418">Kinase</keyword>
<keyword id="KW-0443">Lipid metabolism</keyword>
<keyword id="KW-0472">Membrane</keyword>
<keyword id="KW-0547">Nucleotide-binding</keyword>
<keyword id="KW-1185">Reference proteome</keyword>
<keyword id="KW-0808">Transferase</keyword>
<gene>
    <name type="primary">PIP5K1B</name>
    <name type="ORF">RCJMB04_20j15</name>
</gene>
<reference key="1">
    <citation type="journal article" date="2005" name="Genome Biol.">
        <title>Full-length cDNAs from chicken bursal lymphocytes to facilitate gene function analysis.</title>
        <authorList>
            <person name="Caldwell R.B."/>
            <person name="Kierzek A.M."/>
            <person name="Arakawa H."/>
            <person name="Bezzubov Y."/>
            <person name="Zaim J."/>
            <person name="Fiedler P."/>
            <person name="Kutter S."/>
            <person name="Blagodatski A."/>
            <person name="Kostovska D."/>
            <person name="Koter M."/>
            <person name="Plachy J."/>
            <person name="Carninci P."/>
            <person name="Hayashizaki Y."/>
            <person name="Buerstedde J.-M."/>
        </authorList>
    </citation>
    <scope>NUCLEOTIDE SEQUENCE [LARGE SCALE MRNA]</scope>
    <source>
        <strain>CB</strain>
        <tissue>Bursa of Fabricius</tissue>
    </source>
</reference>
<name>PI51B_CHICK</name>
<protein>
    <recommendedName>
        <fullName evidence="2">Phosphatidylinositol 4-phosphate 5-kinase type-1 beta</fullName>
        <shortName evidence="2">PIP5K1-beta</shortName>
        <shortName evidence="2">PtdIns(4)P-5-kinase 1 beta</shortName>
        <ecNumber evidence="2">2.7.1.68</ecNumber>
    </recommendedName>
    <alternativeName>
        <fullName evidence="2">Phosphatidylinositol 4-phosphate 5-kinase type I beta</fullName>
        <shortName evidence="2">PIP5KIbeta</shortName>
    </alternativeName>
    <alternativeName>
        <fullName evidence="2">Type I phosphatidylinositol 4-phosphate 5-kinase beta</fullName>
    </alternativeName>
</protein>
<comment type="function">
    <text evidence="2 3">Catalyzes the phosphorylation of phosphatidylinositol 4-phosphate (PtdIns(4)P/PI4P) to form phosphatidylinositol 4,5-bisphosphate (PtdIns(4,5)P2/PIP2), a lipid second messenger that regulates several cellular processes such as signal transduction, vesicle trafficking, actin cytoskeleton dynamics, cell adhesion, and cell motility (By similarity). PtdIns(4,5)P2 can directly act as a second messenger or can be utilized as a precursor to generate other second messengers: inositol 1,4,5-trisphosphate (IP3), diacylglycerol (DAG) or phosphatidylinositol-3,4,5-trisphosphate (PtdIns(3,4,5)P3/PIP3) (By similarity).</text>
</comment>
<comment type="catalytic activity">
    <reaction evidence="2">
        <text>a 1,2-diacyl-sn-glycero-3-phospho-(1D-myo-inositol 4-phosphate) + ATP = a 1,2-diacyl-sn-glycero-3-phospho-(1D-myo-inositol-4,5-bisphosphate) + ADP + H(+)</text>
        <dbReference type="Rhea" id="RHEA:14425"/>
        <dbReference type="ChEBI" id="CHEBI:15378"/>
        <dbReference type="ChEBI" id="CHEBI:30616"/>
        <dbReference type="ChEBI" id="CHEBI:58178"/>
        <dbReference type="ChEBI" id="CHEBI:58456"/>
        <dbReference type="ChEBI" id="CHEBI:456216"/>
        <dbReference type="EC" id="2.7.1.68"/>
    </reaction>
    <physiologicalReaction direction="left-to-right" evidence="2">
        <dbReference type="Rhea" id="RHEA:14426"/>
    </physiologicalReaction>
</comment>
<comment type="catalytic activity">
    <reaction evidence="2">
        <text>1-octadecanoyl-2-(5Z,8Z,11Z,14Z)-eicosatetraenoyl-sn-glycero-3-phospho-1D-myo-inositol 4-phosphate + ATP = 1-octadecanoyl-2-(5Z,8Z,11Z,14Z)-eicosatetraenoyl-sn-glycero-3-phospho-1D-myo-inositol 4,5-bisphosphate + ADP + H(+)</text>
        <dbReference type="Rhea" id="RHEA:40363"/>
        <dbReference type="ChEBI" id="CHEBI:15378"/>
        <dbReference type="ChEBI" id="CHEBI:30616"/>
        <dbReference type="ChEBI" id="CHEBI:77136"/>
        <dbReference type="ChEBI" id="CHEBI:77137"/>
        <dbReference type="ChEBI" id="CHEBI:456216"/>
    </reaction>
    <physiologicalReaction direction="left-to-right" evidence="2">
        <dbReference type="Rhea" id="RHEA:40364"/>
    </physiologicalReaction>
</comment>
<comment type="catalytic activity">
    <reaction evidence="2">
        <text>1-octadecanoyl-2-(9Z)-octadecenoyl-sn-glycero-3-phospho-1D-myo-inositol 4-phosphate + ATP = 1-octadecanoyl-2-(9Z)-octadecenoyl-sn-glycero-3-phospho-1D-myo-inositol 4,5-bisphosphate + ADP + H(+)</text>
        <dbReference type="Rhea" id="RHEA:40367"/>
        <dbReference type="ChEBI" id="CHEBI:15378"/>
        <dbReference type="ChEBI" id="CHEBI:30616"/>
        <dbReference type="ChEBI" id="CHEBI:77139"/>
        <dbReference type="ChEBI" id="CHEBI:77140"/>
        <dbReference type="ChEBI" id="CHEBI:456216"/>
    </reaction>
    <physiologicalReaction direction="left-to-right" evidence="2">
        <dbReference type="Rhea" id="RHEA:40368"/>
    </physiologicalReaction>
</comment>
<comment type="catalytic activity">
    <reaction evidence="2">
        <text>1-octadecanoyl-2-(9Z)-octadecenoyl-sn-glycero-3-phospho-1D-myo-inositol + ATP = 1-octadecanoyl-2-(9Z)-octadecenoyl-sn-glycero-3-phospho-1D-myo-inositol 5-phosphate + ADP + H(+)</text>
        <dbReference type="Rhea" id="RHEA:40379"/>
        <dbReference type="ChEBI" id="CHEBI:15378"/>
        <dbReference type="ChEBI" id="CHEBI:30616"/>
        <dbReference type="ChEBI" id="CHEBI:77163"/>
        <dbReference type="ChEBI" id="CHEBI:77164"/>
        <dbReference type="ChEBI" id="CHEBI:456216"/>
    </reaction>
    <physiologicalReaction direction="left-to-right" evidence="2">
        <dbReference type="Rhea" id="RHEA:40380"/>
    </physiologicalReaction>
</comment>
<comment type="catalytic activity">
    <reaction evidence="2">
        <text>1-octadecanoyl-2-(9Z,12Z)-octadecadienoyl-sn-glycero-3-phospho-1D-myo-inositol + ATP = 1-octadecanoyl-2-(9Z,12Z)-octadecadienoyl-sn-glycero-3-phospho-1D-myo-inositol 5-phosphate + ADP + H(+)</text>
        <dbReference type="Rhea" id="RHEA:40383"/>
        <dbReference type="ChEBI" id="CHEBI:15378"/>
        <dbReference type="ChEBI" id="CHEBI:30616"/>
        <dbReference type="ChEBI" id="CHEBI:77158"/>
        <dbReference type="ChEBI" id="CHEBI:77159"/>
        <dbReference type="ChEBI" id="CHEBI:456216"/>
    </reaction>
    <physiologicalReaction direction="left-to-right" evidence="2">
        <dbReference type="Rhea" id="RHEA:40384"/>
    </physiologicalReaction>
</comment>
<comment type="catalytic activity">
    <reaction evidence="2">
        <text>1-octadecanoyl-2-(5Z,8Z,11Z,14Z-eicosatetraenoyl)-sn-glycero-3-phospho-(1D-myo-inositol) + ATP = 1-octadecanoyl-2-(5Z,8Z,11Z,14Z)-eicosatetraenoyl-sn-glycero-3-phospho-1D-myo-inositol 5-phosphate + ADP + H(+)</text>
        <dbReference type="Rhea" id="RHEA:40375"/>
        <dbReference type="ChEBI" id="CHEBI:15378"/>
        <dbReference type="ChEBI" id="CHEBI:30616"/>
        <dbReference type="ChEBI" id="CHEBI:77160"/>
        <dbReference type="ChEBI" id="CHEBI:133606"/>
        <dbReference type="ChEBI" id="CHEBI:456216"/>
    </reaction>
    <physiologicalReaction direction="left-to-right" evidence="2">
        <dbReference type="Rhea" id="RHEA:40376"/>
    </physiologicalReaction>
</comment>
<comment type="catalytic activity">
    <reaction evidence="2">
        <text>1,2-di-(9Z,12Z)-octadecadienoyl-sn-glycero-3-phospho-1D-myo-inositol + ATP = 1,2-di(9Z,12Z)-octadecadienoyl-sn-glycero-3-phospho-1D-myo-inositol 5-phosphate + ADP + H(+)</text>
        <dbReference type="Rhea" id="RHEA:40387"/>
        <dbReference type="ChEBI" id="CHEBI:15378"/>
        <dbReference type="ChEBI" id="CHEBI:30616"/>
        <dbReference type="ChEBI" id="CHEBI:77165"/>
        <dbReference type="ChEBI" id="CHEBI:77167"/>
        <dbReference type="ChEBI" id="CHEBI:456216"/>
    </reaction>
    <physiologicalReaction direction="left-to-right" evidence="2">
        <dbReference type="Rhea" id="RHEA:40388"/>
    </physiologicalReaction>
</comment>
<comment type="subcellular location">
    <subcellularLocation>
        <location evidence="2">Cytoplasm</location>
        <location evidence="2">Cytosol</location>
    </subcellularLocation>
    <subcellularLocation>
        <location evidence="2">Cell membrane</location>
    </subcellularLocation>
    <subcellularLocation>
        <location>Endomembrane system</location>
    </subcellularLocation>
    <text evidence="1">Associated with membranes.</text>
</comment>
<evidence type="ECO:0000250" key="1"/>
<evidence type="ECO:0000250" key="2">
    <source>
        <dbReference type="UniProtKB" id="P70181"/>
    </source>
</evidence>
<evidence type="ECO:0000250" key="3">
    <source>
        <dbReference type="UniProtKB" id="Q99755"/>
    </source>
</evidence>
<evidence type="ECO:0000255" key="4">
    <source>
        <dbReference type="PROSITE-ProRule" id="PRU00781"/>
    </source>
</evidence>
<evidence type="ECO:0000256" key="5">
    <source>
        <dbReference type="SAM" id="MobiDB-lite"/>
    </source>
</evidence>
<organism>
    <name type="scientific">Gallus gallus</name>
    <name type="common">Chicken</name>
    <dbReference type="NCBI Taxonomy" id="9031"/>
    <lineage>
        <taxon>Eukaryota</taxon>
        <taxon>Metazoa</taxon>
        <taxon>Chordata</taxon>
        <taxon>Craniata</taxon>
        <taxon>Vertebrata</taxon>
        <taxon>Euteleostomi</taxon>
        <taxon>Archelosauria</taxon>
        <taxon>Archosauria</taxon>
        <taxon>Dinosauria</taxon>
        <taxon>Saurischia</taxon>
        <taxon>Theropoda</taxon>
        <taxon>Coelurosauria</taxon>
        <taxon>Aves</taxon>
        <taxon>Neognathae</taxon>
        <taxon>Galloanserae</taxon>
        <taxon>Galliformes</taxon>
        <taxon>Phasianidae</taxon>
        <taxon>Phasianinae</taxon>
        <taxon>Gallus</taxon>
    </lineage>
</organism>
<accession>Q5ZJ58</accession>
<feature type="chain" id="PRO_0000185461" description="Phosphatidylinositol 4-phosphate 5-kinase type-1 beta">
    <location>
        <begin position="1"/>
        <end position="540"/>
    </location>
</feature>
<feature type="domain" description="PIPK" evidence="4">
    <location>
        <begin position="25"/>
        <end position="395"/>
    </location>
</feature>
<feature type="region of interest" description="Disordered" evidence="5">
    <location>
        <begin position="1"/>
        <end position="23"/>
    </location>
</feature>
<proteinExistence type="evidence at transcript level"/>
<dbReference type="EC" id="2.7.1.68" evidence="2"/>
<dbReference type="EMBL" id="AJ720576">
    <property type="protein sequence ID" value="CAG32235.1"/>
    <property type="molecule type" value="mRNA"/>
</dbReference>
<dbReference type="RefSeq" id="NP_001026593.1">
    <property type="nucleotide sequence ID" value="NM_001031422.1"/>
</dbReference>
<dbReference type="SMR" id="Q5ZJ58"/>
<dbReference type="FunCoup" id="Q5ZJ58">
    <property type="interactions" value="1325"/>
</dbReference>
<dbReference type="STRING" id="9031.ENSGALP00000072186"/>
<dbReference type="PaxDb" id="9031-ENSGALP00000037435"/>
<dbReference type="GeneID" id="427243"/>
<dbReference type="KEGG" id="gga:427243"/>
<dbReference type="CTD" id="8395"/>
<dbReference type="VEuPathDB" id="HostDB:geneid_427243"/>
<dbReference type="eggNOG" id="KOG0229">
    <property type="taxonomic scope" value="Eukaryota"/>
</dbReference>
<dbReference type="InParanoid" id="Q5ZJ58"/>
<dbReference type="OrthoDB" id="70770at2759"/>
<dbReference type="PhylomeDB" id="Q5ZJ58"/>
<dbReference type="PRO" id="PR:Q5ZJ58"/>
<dbReference type="Proteomes" id="UP000000539">
    <property type="component" value="Unassembled WGS sequence"/>
</dbReference>
<dbReference type="GO" id="GO:0005829">
    <property type="term" value="C:cytosol"/>
    <property type="evidence" value="ECO:0007669"/>
    <property type="project" value="UniProtKB-SubCell"/>
</dbReference>
<dbReference type="GO" id="GO:0012505">
    <property type="term" value="C:endomembrane system"/>
    <property type="evidence" value="ECO:0007669"/>
    <property type="project" value="UniProtKB-SubCell"/>
</dbReference>
<dbReference type="GO" id="GO:0005886">
    <property type="term" value="C:plasma membrane"/>
    <property type="evidence" value="ECO:0000318"/>
    <property type="project" value="GO_Central"/>
</dbReference>
<dbReference type="GO" id="GO:0016308">
    <property type="term" value="F:1-phosphatidylinositol-4-phosphate 5-kinase activity"/>
    <property type="evidence" value="ECO:0000250"/>
    <property type="project" value="UniProtKB"/>
</dbReference>
<dbReference type="GO" id="GO:0005524">
    <property type="term" value="F:ATP binding"/>
    <property type="evidence" value="ECO:0007669"/>
    <property type="project" value="UniProtKB-KW"/>
</dbReference>
<dbReference type="GO" id="GO:0046854">
    <property type="term" value="P:phosphatidylinositol phosphate biosynthetic process"/>
    <property type="evidence" value="ECO:0000318"/>
    <property type="project" value="GO_Central"/>
</dbReference>
<dbReference type="CDD" id="cd17307">
    <property type="entry name" value="PIPKc_PIP5K1B"/>
    <property type="match status" value="1"/>
</dbReference>
<dbReference type="FunFam" id="3.30.800.10:FF:000001">
    <property type="entry name" value="phosphatidylinositol 4-phosphate 5-kinase type-1 gamma"/>
    <property type="match status" value="1"/>
</dbReference>
<dbReference type="Gene3D" id="3.30.810.10">
    <property type="entry name" value="2-Layer Sandwich"/>
    <property type="match status" value="1"/>
</dbReference>
<dbReference type="Gene3D" id="3.30.800.10">
    <property type="entry name" value="Phosphatidylinositol Phosphate Kinase II Beta"/>
    <property type="match status" value="1"/>
</dbReference>
<dbReference type="InterPro" id="IPR027483">
    <property type="entry name" value="PInositol-4-P-4/5-kinase_C_sf"/>
</dbReference>
<dbReference type="InterPro" id="IPR002498">
    <property type="entry name" value="PInositol-4-P-4/5-kinase_core"/>
</dbReference>
<dbReference type="InterPro" id="IPR027484">
    <property type="entry name" value="PInositol-4-P-5-kinase_N"/>
</dbReference>
<dbReference type="InterPro" id="IPR023610">
    <property type="entry name" value="PInositol-4/5-P-5/4-kinase"/>
</dbReference>
<dbReference type="PANTHER" id="PTHR23086:SF34">
    <property type="entry name" value="PHOSPHATIDYLINOSITOL 4-PHOSPHATE 5-KINASE TYPE-1 BETA"/>
    <property type="match status" value="1"/>
</dbReference>
<dbReference type="PANTHER" id="PTHR23086">
    <property type="entry name" value="PHOSPHATIDYLINOSITOL-4-PHOSPHATE 5-KINASE"/>
    <property type="match status" value="1"/>
</dbReference>
<dbReference type="Pfam" id="PF01504">
    <property type="entry name" value="PIP5K"/>
    <property type="match status" value="1"/>
</dbReference>
<dbReference type="SMART" id="SM00330">
    <property type="entry name" value="PIPKc"/>
    <property type="match status" value="1"/>
</dbReference>
<dbReference type="SUPFAM" id="SSF56104">
    <property type="entry name" value="SAICAR synthase-like"/>
    <property type="match status" value="1"/>
</dbReference>
<dbReference type="PROSITE" id="PS51455">
    <property type="entry name" value="PIPK"/>
    <property type="match status" value="1"/>
</dbReference>